<proteinExistence type="evidence at transcript level"/>
<reference key="1">
    <citation type="submission" date="2007-07" db="EMBL/GenBank/DDBJ databases">
        <authorList>
            <consortium name="NIH - Mammalian Gene Collection (MGC) project"/>
        </authorList>
    </citation>
    <scope>NUCLEOTIDE SEQUENCE [LARGE SCALE MRNA]</scope>
    <source>
        <strain>Crossbred X Angus</strain>
        <tissue>Ileum</tissue>
    </source>
</reference>
<name>M4A18_BOVIN</name>
<evidence type="ECO:0000255" key="1"/>
<evidence type="ECO:0000256" key="2">
    <source>
        <dbReference type="SAM" id="MobiDB-lite"/>
    </source>
</evidence>
<evidence type="ECO:0000305" key="3"/>
<keyword id="KW-0472">Membrane</keyword>
<keyword id="KW-1185">Reference proteome</keyword>
<keyword id="KW-0812">Transmembrane</keyword>
<keyword id="KW-1133">Transmembrane helix</keyword>
<protein>
    <recommendedName>
        <fullName>Membrane-spanning 4-domains subfamily A member 18</fullName>
    </recommendedName>
</protein>
<organism>
    <name type="scientific">Bos taurus</name>
    <name type="common">Bovine</name>
    <dbReference type="NCBI Taxonomy" id="9913"/>
    <lineage>
        <taxon>Eukaryota</taxon>
        <taxon>Metazoa</taxon>
        <taxon>Chordata</taxon>
        <taxon>Craniata</taxon>
        <taxon>Vertebrata</taxon>
        <taxon>Euteleostomi</taxon>
        <taxon>Mammalia</taxon>
        <taxon>Eutheria</taxon>
        <taxon>Laurasiatheria</taxon>
        <taxon>Artiodactyla</taxon>
        <taxon>Ruminantia</taxon>
        <taxon>Pecora</taxon>
        <taxon>Bovidae</taxon>
        <taxon>Bovinae</taxon>
        <taxon>Bos</taxon>
    </lineage>
</organism>
<sequence length="337" mass="35566">MMEQGVGANTVPGVTAPGNVYMIQARNPVAPGSKGQPVGMATYLTSRVTESDAGRANLQTPRVVIQNPAEVNATQGPPTALQHPTAVASLQTPPGEIQYSLGTTDLQTQPGGPQNPPTCAPGPMYTSNQFQWNMPFGSSFTFDPKKFIKDEVRTLGAIQILIGLTHIFTAINPSLYRQYSYSAISGYLVWGGIFFIISGSLSVEAEKDRSSCMVHGSVGMNVVSAIVSLAGVLLLLVDLIRNPVIDVKTVSGGLLPFVLLEFCLTCVVSHFGCQATCWNQFVNRTEVPTIVIANPANTPTGPFNATYSTTGHVNVITSSANPTSPTNAAAMVPPVPS</sequence>
<dbReference type="EMBL" id="BC149291">
    <property type="protein sequence ID" value="AAI49292.1"/>
    <property type="molecule type" value="mRNA"/>
</dbReference>
<dbReference type="RefSeq" id="NP_001095462.1">
    <property type="nucleotide sequence ID" value="NM_001101992.2"/>
</dbReference>
<dbReference type="RefSeq" id="XP_005226906.1">
    <property type="nucleotide sequence ID" value="XM_005226849.3"/>
</dbReference>
<dbReference type="RefSeq" id="XP_010819270.1">
    <property type="nucleotide sequence ID" value="XM_010820968.2"/>
</dbReference>
<dbReference type="RefSeq" id="XP_059738885.1">
    <property type="nucleotide sequence ID" value="XM_059882902.1"/>
</dbReference>
<dbReference type="SMR" id="A6QPF4"/>
<dbReference type="STRING" id="9913.ENSBTAP00000044342"/>
<dbReference type="PaxDb" id="9913-ENSBTAP00000044342"/>
<dbReference type="Ensembl" id="ENSBTAT00000047112.3">
    <property type="protein sequence ID" value="ENSBTAP00000044342.2"/>
    <property type="gene ID" value="ENSBTAG00000038312.3"/>
</dbReference>
<dbReference type="GeneID" id="514287"/>
<dbReference type="KEGG" id="bta:514287"/>
<dbReference type="CTD" id="728588"/>
<dbReference type="VEuPathDB" id="HostDB:ENSBTAG00000038312"/>
<dbReference type="VGNC" id="VGNC:31684">
    <property type="gene designation" value="MS4A18"/>
</dbReference>
<dbReference type="eggNOG" id="ENOG502RZ20">
    <property type="taxonomic scope" value="Eukaryota"/>
</dbReference>
<dbReference type="GeneTree" id="ENSGT00940000163489"/>
<dbReference type="HOGENOM" id="CLU_071067_0_0_1"/>
<dbReference type="InParanoid" id="A6QPF4"/>
<dbReference type="OMA" id="KVIQCDT"/>
<dbReference type="OrthoDB" id="8951938at2759"/>
<dbReference type="TreeFam" id="TF335157"/>
<dbReference type="Proteomes" id="UP000009136">
    <property type="component" value="Chromosome 29"/>
</dbReference>
<dbReference type="Bgee" id="ENSBTAG00000038312">
    <property type="expression patterns" value="Expressed in jejunum and 27 other cell types or tissues"/>
</dbReference>
<dbReference type="GO" id="GO:0005886">
    <property type="term" value="C:plasma membrane"/>
    <property type="evidence" value="ECO:0000318"/>
    <property type="project" value="GO_Central"/>
</dbReference>
<dbReference type="GO" id="GO:0007166">
    <property type="term" value="P:cell surface receptor signaling pathway"/>
    <property type="evidence" value="ECO:0000318"/>
    <property type="project" value="GO_Central"/>
</dbReference>
<dbReference type="InterPro" id="IPR007237">
    <property type="entry name" value="CD20-like"/>
</dbReference>
<dbReference type="InterPro" id="IPR030417">
    <property type="entry name" value="MS4A"/>
</dbReference>
<dbReference type="PANTHER" id="PTHR23320:SF37">
    <property type="entry name" value="MEMBRANE-SPANNING 4-DOMAINS SUBFAMILY A MEMBER 18"/>
    <property type="match status" value="1"/>
</dbReference>
<dbReference type="PANTHER" id="PTHR23320">
    <property type="entry name" value="MEMBRANE-SPANNING 4-DOMAINS SUBFAMILY A MS4A -RELATED"/>
    <property type="match status" value="1"/>
</dbReference>
<dbReference type="Pfam" id="PF04103">
    <property type="entry name" value="CD20"/>
    <property type="match status" value="1"/>
</dbReference>
<gene>
    <name type="primary">MS4A18</name>
</gene>
<feature type="chain" id="PRO_0000395339" description="Membrane-spanning 4-domains subfamily A member 18">
    <location>
        <begin position="1"/>
        <end position="337"/>
    </location>
</feature>
<feature type="transmembrane region" description="Helical" evidence="1">
    <location>
        <begin position="155"/>
        <end position="175"/>
    </location>
</feature>
<feature type="transmembrane region" description="Helical" evidence="1">
    <location>
        <begin position="183"/>
        <end position="203"/>
    </location>
</feature>
<feature type="transmembrane region" description="Helical" evidence="1">
    <location>
        <begin position="220"/>
        <end position="240"/>
    </location>
</feature>
<feature type="transmembrane region" description="Helical" evidence="1">
    <location>
        <begin position="252"/>
        <end position="272"/>
    </location>
</feature>
<feature type="region of interest" description="Disordered" evidence="2">
    <location>
        <begin position="101"/>
        <end position="121"/>
    </location>
</feature>
<accession>A6QPF4</accession>
<comment type="subcellular location">
    <subcellularLocation>
        <location evidence="3">Membrane</location>
        <topology evidence="3">Multi-pass membrane protein</topology>
    </subcellularLocation>
</comment>
<comment type="similarity">
    <text evidence="3">Belongs to the MS4A family.</text>
</comment>